<protein>
    <recommendedName>
        <fullName evidence="1">Macrolide export ATP-binding/permease protein MacB</fullName>
        <ecNumber evidence="1">7.6.2.-</ecNumber>
    </recommendedName>
</protein>
<accession>A0LM36</accession>
<gene>
    <name evidence="1" type="primary">macB</name>
    <name type="ordered locus">Sfum_2810</name>
</gene>
<feature type="chain" id="PRO_0000280176" description="Macrolide export ATP-binding/permease protein MacB">
    <location>
        <begin position="1"/>
        <end position="715"/>
    </location>
</feature>
<feature type="transmembrane region" description="Helical" evidence="1">
    <location>
        <begin position="277"/>
        <end position="297"/>
    </location>
</feature>
<feature type="transmembrane region" description="Helical" evidence="1">
    <location>
        <begin position="592"/>
        <end position="612"/>
    </location>
</feature>
<feature type="transmembrane region" description="Helical" evidence="1">
    <location>
        <begin position="639"/>
        <end position="659"/>
    </location>
</feature>
<feature type="transmembrane region" description="Helical" evidence="1">
    <location>
        <begin position="681"/>
        <end position="701"/>
    </location>
</feature>
<feature type="domain" description="ABC transporter" evidence="1">
    <location>
        <begin position="4"/>
        <end position="245"/>
    </location>
</feature>
<feature type="region of interest" description="Disordered" evidence="2">
    <location>
        <begin position="229"/>
        <end position="251"/>
    </location>
</feature>
<feature type="binding site" evidence="1">
    <location>
        <begin position="40"/>
        <end position="47"/>
    </location>
    <ligand>
        <name>ATP</name>
        <dbReference type="ChEBI" id="CHEBI:30616"/>
    </ligand>
</feature>
<name>MACB_SYNFM</name>
<evidence type="ECO:0000255" key="1">
    <source>
        <dbReference type="HAMAP-Rule" id="MF_01720"/>
    </source>
</evidence>
<evidence type="ECO:0000256" key="2">
    <source>
        <dbReference type="SAM" id="MobiDB-lite"/>
    </source>
</evidence>
<reference key="1">
    <citation type="submission" date="2006-10" db="EMBL/GenBank/DDBJ databases">
        <title>Complete sequence of Syntrophobacter fumaroxidans MPOB.</title>
        <authorList>
            <consortium name="US DOE Joint Genome Institute"/>
            <person name="Copeland A."/>
            <person name="Lucas S."/>
            <person name="Lapidus A."/>
            <person name="Barry K."/>
            <person name="Detter J.C."/>
            <person name="Glavina del Rio T."/>
            <person name="Hammon N."/>
            <person name="Israni S."/>
            <person name="Pitluck S."/>
            <person name="Goltsman E.G."/>
            <person name="Martinez M."/>
            <person name="Schmutz J."/>
            <person name="Larimer F."/>
            <person name="Land M."/>
            <person name="Hauser L."/>
            <person name="Kyrpides N."/>
            <person name="Kim E."/>
            <person name="Boone D.R."/>
            <person name="Brockman F."/>
            <person name="Culley D."/>
            <person name="Ferry J."/>
            <person name="Gunsalus R."/>
            <person name="McInerney M.J."/>
            <person name="Morrison M."/>
            <person name="Plugge C."/>
            <person name="Rohlin L."/>
            <person name="Scholten J."/>
            <person name="Sieber J."/>
            <person name="Stams A.J.M."/>
            <person name="Worm P."/>
            <person name="Henstra A.M."/>
            <person name="Richardson P."/>
        </authorList>
    </citation>
    <scope>NUCLEOTIDE SEQUENCE [LARGE SCALE GENOMIC DNA]</scope>
    <source>
        <strain>DSM 10017 / MPOB</strain>
    </source>
</reference>
<keyword id="KW-0046">Antibiotic resistance</keyword>
<keyword id="KW-0067">ATP-binding</keyword>
<keyword id="KW-0997">Cell inner membrane</keyword>
<keyword id="KW-1003">Cell membrane</keyword>
<keyword id="KW-0472">Membrane</keyword>
<keyword id="KW-0547">Nucleotide-binding</keyword>
<keyword id="KW-1185">Reference proteome</keyword>
<keyword id="KW-1278">Translocase</keyword>
<keyword id="KW-0812">Transmembrane</keyword>
<keyword id="KW-1133">Transmembrane helix</keyword>
<keyword id="KW-0813">Transport</keyword>
<proteinExistence type="inferred from homology"/>
<dbReference type="EC" id="7.6.2.-" evidence="1"/>
<dbReference type="EMBL" id="CP000478">
    <property type="protein sequence ID" value="ABK18488.1"/>
    <property type="molecule type" value="Genomic_DNA"/>
</dbReference>
<dbReference type="RefSeq" id="WP_011699655.1">
    <property type="nucleotide sequence ID" value="NC_008554.1"/>
</dbReference>
<dbReference type="SMR" id="A0LM36"/>
<dbReference type="FunCoup" id="A0LM36">
    <property type="interactions" value="269"/>
</dbReference>
<dbReference type="STRING" id="335543.Sfum_2810"/>
<dbReference type="KEGG" id="sfu:Sfum_2810"/>
<dbReference type="eggNOG" id="COG0577">
    <property type="taxonomic scope" value="Bacteria"/>
</dbReference>
<dbReference type="eggNOG" id="COG1136">
    <property type="taxonomic scope" value="Bacteria"/>
</dbReference>
<dbReference type="HOGENOM" id="CLU_000604_78_2_7"/>
<dbReference type="InParanoid" id="A0LM36"/>
<dbReference type="OrthoDB" id="9802264at2"/>
<dbReference type="Proteomes" id="UP000001784">
    <property type="component" value="Chromosome"/>
</dbReference>
<dbReference type="GO" id="GO:0005886">
    <property type="term" value="C:plasma membrane"/>
    <property type="evidence" value="ECO:0007669"/>
    <property type="project" value="UniProtKB-SubCell"/>
</dbReference>
<dbReference type="GO" id="GO:0005524">
    <property type="term" value="F:ATP binding"/>
    <property type="evidence" value="ECO:0007669"/>
    <property type="project" value="UniProtKB-KW"/>
</dbReference>
<dbReference type="GO" id="GO:0016887">
    <property type="term" value="F:ATP hydrolysis activity"/>
    <property type="evidence" value="ECO:0007669"/>
    <property type="project" value="InterPro"/>
</dbReference>
<dbReference type="GO" id="GO:0022857">
    <property type="term" value="F:transmembrane transporter activity"/>
    <property type="evidence" value="ECO:0007669"/>
    <property type="project" value="TreeGrafter"/>
</dbReference>
<dbReference type="GO" id="GO:0046677">
    <property type="term" value="P:response to antibiotic"/>
    <property type="evidence" value="ECO:0007669"/>
    <property type="project" value="UniProtKB-KW"/>
</dbReference>
<dbReference type="CDD" id="cd03255">
    <property type="entry name" value="ABC_MJ0796_LolCDE_FtsE"/>
    <property type="match status" value="1"/>
</dbReference>
<dbReference type="FunFam" id="3.40.50.300:FF:000032">
    <property type="entry name" value="Export ABC transporter ATP-binding protein"/>
    <property type="match status" value="1"/>
</dbReference>
<dbReference type="Gene3D" id="3.40.50.300">
    <property type="entry name" value="P-loop containing nucleotide triphosphate hydrolases"/>
    <property type="match status" value="1"/>
</dbReference>
<dbReference type="InterPro" id="IPR003593">
    <property type="entry name" value="AAA+_ATPase"/>
</dbReference>
<dbReference type="InterPro" id="IPR003838">
    <property type="entry name" value="ABC3_permease_C"/>
</dbReference>
<dbReference type="InterPro" id="IPR003439">
    <property type="entry name" value="ABC_transporter-like_ATP-bd"/>
</dbReference>
<dbReference type="InterPro" id="IPR017871">
    <property type="entry name" value="ABC_transporter-like_CS"/>
</dbReference>
<dbReference type="InterPro" id="IPR017911">
    <property type="entry name" value="MacB-like_ATP-bd"/>
</dbReference>
<dbReference type="InterPro" id="IPR025857">
    <property type="entry name" value="MacB_PCD"/>
</dbReference>
<dbReference type="InterPro" id="IPR050250">
    <property type="entry name" value="Macrolide_Exporter_MacB"/>
</dbReference>
<dbReference type="InterPro" id="IPR027417">
    <property type="entry name" value="P-loop_NTPase"/>
</dbReference>
<dbReference type="PANTHER" id="PTHR30572:SF4">
    <property type="entry name" value="ABC TRANSPORTER PERMEASE YTRF"/>
    <property type="match status" value="1"/>
</dbReference>
<dbReference type="PANTHER" id="PTHR30572">
    <property type="entry name" value="MEMBRANE COMPONENT OF TRANSPORTER-RELATED"/>
    <property type="match status" value="1"/>
</dbReference>
<dbReference type="Pfam" id="PF00005">
    <property type="entry name" value="ABC_tran"/>
    <property type="match status" value="1"/>
</dbReference>
<dbReference type="Pfam" id="PF02687">
    <property type="entry name" value="FtsX"/>
    <property type="match status" value="1"/>
</dbReference>
<dbReference type="Pfam" id="PF12704">
    <property type="entry name" value="MacB_PCD"/>
    <property type="match status" value="1"/>
</dbReference>
<dbReference type="SMART" id="SM00382">
    <property type="entry name" value="AAA"/>
    <property type="match status" value="1"/>
</dbReference>
<dbReference type="SUPFAM" id="SSF52540">
    <property type="entry name" value="P-loop containing nucleoside triphosphate hydrolases"/>
    <property type="match status" value="1"/>
</dbReference>
<dbReference type="PROSITE" id="PS00211">
    <property type="entry name" value="ABC_TRANSPORTER_1"/>
    <property type="match status" value="1"/>
</dbReference>
<dbReference type="PROSITE" id="PS50893">
    <property type="entry name" value="ABC_TRANSPORTER_2"/>
    <property type="match status" value="1"/>
</dbReference>
<dbReference type="PROSITE" id="PS51267">
    <property type="entry name" value="MACB"/>
    <property type="match status" value="1"/>
</dbReference>
<organism>
    <name type="scientific">Syntrophobacter fumaroxidans (strain DSM 10017 / MPOB)</name>
    <dbReference type="NCBI Taxonomy" id="335543"/>
    <lineage>
        <taxon>Bacteria</taxon>
        <taxon>Pseudomonadati</taxon>
        <taxon>Thermodesulfobacteriota</taxon>
        <taxon>Syntrophobacteria</taxon>
        <taxon>Syntrophobacterales</taxon>
        <taxon>Syntrophobacteraceae</taxon>
        <taxon>Syntrophobacter</taxon>
    </lineage>
</organism>
<comment type="function">
    <text evidence="1">Non-canonical ABC transporter that contains transmembrane domains (TMD), which form a pore in the inner membrane, and an ATP-binding domain (NBD), which is responsible for energy generation. Confers resistance against macrolides.</text>
</comment>
<comment type="subunit">
    <text evidence="1">Homodimer.</text>
</comment>
<comment type="subcellular location">
    <subcellularLocation>
        <location evidence="1">Cell inner membrane</location>
        <topology evidence="1">Multi-pass membrane protein</topology>
    </subcellularLocation>
</comment>
<comment type="similarity">
    <text evidence="1">Belongs to the ABC transporter superfamily. Macrolide exporter (TC 3.A.1.122) family.</text>
</comment>
<sequence>MDLIELQDIRKTYRLGEIDVPVLRGISLKVSPGDFVALMGTSGSGKTTLMNILGCLDRPTSGHYRFDGQDVVDLTPDQRAALRNRKIGFVFQNFNLLPRMSAVENVMMPLSYAGGGVSDQNGRERAGALLTRMGLGEHLDNEPSQLSGGQQQRVAIARALINNPSLLFADEPTGNLDSATSEEVLRVFQRLNEEEGVTIILVTHDPSVAQCARRIVRIRDGVIEPESGAVGDMPQVSKAAPAQSKPVHSAMRRGDLDKFRRSLHTALSSLRRNVLRAALTTLGIIIGVAAVIAMMEIGRGSSTAIQRTIASMGAHTLALLPGTAASGGVSFGGGSVMTMTPQDSEAIVNECPAVLAAAPIVRARTQVVHGSRNWVPAGIYGTTPTFLEIREWPLAEGDVFTERDVRNASKVCVLGQRLVDELFQGENPIGLEVRIKNVAFKVIGVLSPKGANMMGMDQDDLLLAPWTAIKYRVTGSSLANVNQSAASTSSASITDQVNSLSNLYPTEKVVLYPEISTTQAFDTPLPVRFTNVDQILVGIRSTSGTRAAIRQIGEVLRERHRLRPGEPDDFSVRDMTEMTKTLASTATMMTKLLLAVALISLIVGGVGIMNIMMVSVTERTREIGLRMAVGARAKNILQQFLFEAVLLCFLGGAVGILVGRGISHLVTVLLNWPTELSLDAILAAVGVSATVGIVFGYYPAWKASRLDPIVALRYE</sequence>